<feature type="chain" id="PRO_1000058130" description="Uracil-DNA glycosylase">
    <location>
        <begin position="1"/>
        <end position="227"/>
    </location>
</feature>
<feature type="active site" description="Proton acceptor" evidence="1">
    <location>
        <position position="64"/>
    </location>
</feature>
<keyword id="KW-0963">Cytoplasm</keyword>
<keyword id="KW-0227">DNA damage</keyword>
<keyword id="KW-0234">DNA repair</keyword>
<keyword id="KW-0378">Hydrolase</keyword>
<evidence type="ECO:0000255" key="1">
    <source>
        <dbReference type="HAMAP-Rule" id="MF_00148"/>
    </source>
</evidence>
<sequence>MSTSLTWHDVIGKEKEQPYFHETLAFVAAERQAGKTIYPPQKDVFNAFRYTELADVKVVILGQDPYHGPNQAHGLSFSVLPGVPAPPSLVNMYKELATDIPGFERPSHGCLQSWAEQGVLLLNTVLTVEGGQAHSHAKLGWETFTDKVIAALNENREGVVFLLWGAHAQKKGNFIDSNRHHVLKAPHPSPLSAHRGFLGCRHFSQANQLLVQQGLQPIDWLPQLPQS</sequence>
<protein>
    <recommendedName>
        <fullName evidence="1">Uracil-DNA glycosylase</fullName>
        <shortName evidence="1">UDG</shortName>
        <ecNumber evidence="1">3.2.2.27</ecNumber>
    </recommendedName>
</protein>
<dbReference type="EC" id="3.2.2.27" evidence="1"/>
<dbReference type="EMBL" id="CP000826">
    <property type="protein sequence ID" value="ABV42779.1"/>
    <property type="molecule type" value="Genomic_DNA"/>
</dbReference>
<dbReference type="SMR" id="A8GI39"/>
<dbReference type="STRING" id="399741.Spro_3683"/>
<dbReference type="KEGG" id="spe:Spro_3683"/>
<dbReference type="eggNOG" id="COG0692">
    <property type="taxonomic scope" value="Bacteria"/>
</dbReference>
<dbReference type="HOGENOM" id="CLU_032162_3_0_6"/>
<dbReference type="OrthoDB" id="9804372at2"/>
<dbReference type="GO" id="GO:0005737">
    <property type="term" value="C:cytoplasm"/>
    <property type="evidence" value="ECO:0007669"/>
    <property type="project" value="UniProtKB-SubCell"/>
</dbReference>
<dbReference type="GO" id="GO:0004844">
    <property type="term" value="F:uracil DNA N-glycosylase activity"/>
    <property type="evidence" value="ECO:0007669"/>
    <property type="project" value="UniProtKB-UniRule"/>
</dbReference>
<dbReference type="GO" id="GO:0097510">
    <property type="term" value="P:base-excision repair, AP site formation via deaminated base removal"/>
    <property type="evidence" value="ECO:0007669"/>
    <property type="project" value="TreeGrafter"/>
</dbReference>
<dbReference type="CDD" id="cd10027">
    <property type="entry name" value="UDG-F1-like"/>
    <property type="match status" value="1"/>
</dbReference>
<dbReference type="FunFam" id="3.40.470.10:FF:000001">
    <property type="entry name" value="Uracil-DNA glycosylase"/>
    <property type="match status" value="1"/>
</dbReference>
<dbReference type="Gene3D" id="3.40.470.10">
    <property type="entry name" value="Uracil-DNA glycosylase-like domain"/>
    <property type="match status" value="1"/>
</dbReference>
<dbReference type="HAMAP" id="MF_00148">
    <property type="entry name" value="UDG"/>
    <property type="match status" value="1"/>
</dbReference>
<dbReference type="InterPro" id="IPR002043">
    <property type="entry name" value="UDG_fam1"/>
</dbReference>
<dbReference type="InterPro" id="IPR018085">
    <property type="entry name" value="Ura-DNA_Glyclase_AS"/>
</dbReference>
<dbReference type="InterPro" id="IPR005122">
    <property type="entry name" value="Uracil-DNA_glycosylase-like"/>
</dbReference>
<dbReference type="InterPro" id="IPR036895">
    <property type="entry name" value="Uracil-DNA_glycosylase-like_sf"/>
</dbReference>
<dbReference type="NCBIfam" id="NF003588">
    <property type="entry name" value="PRK05254.1-1"/>
    <property type="match status" value="1"/>
</dbReference>
<dbReference type="NCBIfam" id="NF003589">
    <property type="entry name" value="PRK05254.1-2"/>
    <property type="match status" value="1"/>
</dbReference>
<dbReference type="NCBIfam" id="NF003591">
    <property type="entry name" value="PRK05254.1-4"/>
    <property type="match status" value="1"/>
</dbReference>
<dbReference type="NCBIfam" id="NF003592">
    <property type="entry name" value="PRK05254.1-5"/>
    <property type="match status" value="1"/>
</dbReference>
<dbReference type="NCBIfam" id="TIGR00628">
    <property type="entry name" value="ung"/>
    <property type="match status" value="1"/>
</dbReference>
<dbReference type="PANTHER" id="PTHR11264">
    <property type="entry name" value="URACIL-DNA GLYCOSYLASE"/>
    <property type="match status" value="1"/>
</dbReference>
<dbReference type="PANTHER" id="PTHR11264:SF0">
    <property type="entry name" value="URACIL-DNA GLYCOSYLASE"/>
    <property type="match status" value="1"/>
</dbReference>
<dbReference type="Pfam" id="PF03167">
    <property type="entry name" value="UDG"/>
    <property type="match status" value="1"/>
</dbReference>
<dbReference type="SMART" id="SM00986">
    <property type="entry name" value="UDG"/>
    <property type="match status" value="1"/>
</dbReference>
<dbReference type="SMART" id="SM00987">
    <property type="entry name" value="UreE_C"/>
    <property type="match status" value="1"/>
</dbReference>
<dbReference type="SUPFAM" id="SSF52141">
    <property type="entry name" value="Uracil-DNA glycosylase-like"/>
    <property type="match status" value="1"/>
</dbReference>
<dbReference type="PROSITE" id="PS00130">
    <property type="entry name" value="U_DNA_GLYCOSYLASE"/>
    <property type="match status" value="1"/>
</dbReference>
<reference key="1">
    <citation type="submission" date="2007-09" db="EMBL/GenBank/DDBJ databases">
        <title>Complete sequence of chromosome of Serratia proteamaculans 568.</title>
        <authorList>
            <consortium name="US DOE Joint Genome Institute"/>
            <person name="Copeland A."/>
            <person name="Lucas S."/>
            <person name="Lapidus A."/>
            <person name="Barry K."/>
            <person name="Glavina del Rio T."/>
            <person name="Dalin E."/>
            <person name="Tice H."/>
            <person name="Pitluck S."/>
            <person name="Chain P."/>
            <person name="Malfatti S."/>
            <person name="Shin M."/>
            <person name="Vergez L."/>
            <person name="Schmutz J."/>
            <person name="Larimer F."/>
            <person name="Land M."/>
            <person name="Hauser L."/>
            <person name="Kyrpides N."/>
            <person name="Kim E."/>
            <person name="Taghavi S."/>
            <person name="Newman L."/>
            <person name="Vangronsveld J."/>
            <person name="van der Lelie D."/>
            <person name="Richardson P."/>
        </authorList>
    </citation>
    <scope>NUCLEOTIDE SEQUENCE [LARGE SCALE GENOMIC DNA]</scope>
    <source>
        <strain>568</strain>
    </source>
</reference>
<gene>
    <name evidence="1" type="primary">ung</name>
    <name type="ordered locus">Spro_3683</name>
</gene>
<proteinExistence type="inferred from homology"/>
<organism>
    <name type="scientific">Serratia proteamaculans (strain 568)</name>
    <dbReference type="NCBI Taxonomy" id="399741"/>
    <lineage>
        <taxon>Bacteria</taxon>
        <taxon>Pseudomonadati</taxon>
        <taxon>Pseudomonadota</taxon>
        <taxon>Gammaproteobacteria</taxon>
        <taxon>Enterobacterales</taxon>
        <taxon>Yersiniaceae</taxon>
        <taxon>Serratia</taxon>
    </lineage>
</organism>
<name>UNG_SERP5</name>
<comment type="function">
    <text evidence="1">Excises uracil residues from the DNA which can arise as a result of misincorporation of dUMP residues by DNA polymerase or due to deamination of cytosine.</text>
</comment>
<comment type="catalytic activity">
    <reaction evidence="1">
        <text>Hydrolyzes single-stranded DNA or mismatched double-stranded DNA and polynucleotides, releasing free uracil.</text>
        <dbReference type="EC" id="3.2.2.27"/>
    </reaction>
</comment>
<comment type="subcellular location">
    <subcellularLocation>
        <location evidence="1">Cytoplasm</location>
    </subcellularLocation>
</comment>
<comment type="similarity">
    <text evidence="1">Belongs to the uracil-DNA glycosylase (UDG) superfamily. UNG family.</text>
</comment>
<accession>A8GI39</accession>